<organism>
    <name type="scientific">Bacillus cereus (strain AH187)</name>
    <dbReference type="NCBI Taxonomy" id="405534"/>
    <lineage>
        <taxon>Bacteria</taxon>
        <taxon>Bacillati</taxon>
        <taxon>Bacillota</taxon>
        <taxon>Bacilli</taxon>
        <taxon>Bacillales</taxon>
        <taxon>Bacillaceae</taxon>
        <taxon>Bacillus</taxon>
        <taxon>Bacillus cereus group</taxon>
    </lineage>
</organism>
<keyword id="KW-0963">Cytoplasm</keyword>
<keyword id="KW-0255">Endonuclease</keyword>
<keyword id="KW-0378">Hydrolase</keyword>
<keyword id="KW-0460">Magnesium</keyword>
<keyword id="KW-0479">Metal-binding</keyword>
<keyword id="KW-0540">Nuclease</keyword>
<sequence>MSNSIVIQTNSTVIEDMKQQYKHSLSPKTPQGGIFMAKVPSCTITAYKSGKVMFQGGRAEAEASRWQTVSQTPKTAVKRSVDSHRYAPPASIGTMSIVGSDEVGTGDFFGPMTVVAVYVDAKQIPLLKELGVKDSKNLNDEQITAIAKQLLHVVPYSSLVLHNEKYNELFDKGNNQGKLKALLHNKAITNLLAKMAPIKPEGVLIDQFTQPDTYYKYLAKQKQVQRENVYFATKGESVHLAVAAASILARYSFVKQFNELSKKAGMPLPKGAGKQVDIAAAKLIQKLGKERLPEFVKLHFANTEKAFRLLK</sequence>
<protein>
    <recommendedName>
        <fullName evidence="1">Ribonuclease HIII</fullName>
        <shortName evidence="1">RNase HIII</shortName>
        <ecNumber evidence="1">3.1.26.4</ecNumber>
    </recommendedName>
</protein>
<proteinExistence type="inferred from homology"/>
<comment type="function">
    <text evidence="1">Endonuclease that specifically degrades the RNA of RNA-DNA hybrids.</text>
</comment>
<comment type="catalytic activity">
    <reaction evidence="1">
        <text>Endonucleolytic cleavage to 5'-phosphomonoester.</text>
        <dbReference type="EC" id="3.1.26.4"/>
    </reaction>
</comment>
<comment type="cofactor">
    <cofactor evidence="1">
        <name>Mn(2+)</name>
        <dbReference type="ChEBI" id="CHEBI:29035"/>
    </cofactor>
    <cofactor evidence="1">
        <name>Mg(2+)</name>
        <dbReference type="ChEBI" id="CHEBI:18420"/>
    </cofactor>
    <text evidence="1">Manganese or magnesium. Binds 1 divalent metal ion per monomer in the absence of substrate. May bind a second metal ion after substrate binding.</text>
</comment>
<comment type="subcellular location">
    <subcellularLocation>
        <location evidence="1">Cytoplasm</location>
    </subcellularLocation>
</comment>
<comment type="similarity">
    <text evidence="1">Belongs to the RNase HII family. RnhC subfamily.</text>
</comment>
<accession>B7HRJ7</accession>
<dbReference type="EC" id="3.1.26.4" evidence="1"/>
<dbReference type="EMBL" id="CP001177">
    <property type="protein sequence ID" value="ACJ81769.1"/>
    <property type="molecule type" value="Genomic_DNA"/>
</dbReference>
<dbReference type="SMR" id="B7HRJ7"/>
<dbReference type="KEGG" id="bcr:BCAH187_A4682"/>
<dbReference type="HOGENOM" id="CLU_059546_1_0_9"/>
<dbReference type="Proteomes" id="UP000002214">
    <property type="component" value="Chromosome"/>
</dbReference>
<dbReference type="GO" id="GO:0005737">
    <property type="term" value="C:cytoplasm"/>
    <property type="evidence" value="ECO:0007669"/>
    <property type="project" value="UniProtKB-SubCell"/>
</dbReference>
<dbReference type="GO" id="GO:0032299">
    <property type="term" value="C:ribonuclease H2 complex"/>
    <property type="evidence" value="ECO:0007669"/>
    <property type="project" value="TreeGrafter"/>
</dbReference>
<dbReference type="GO" id="GO:0000287">
    <property type="term" value="F:magnesium ion binding"/>
    <property type="evidence" value="ECO:0007669"/>
    <property type="project" value="UniProtKB-UniRule"/>
</dbReference>
<dbReference type="GO" id="GO:0003723">
    <property type="term" value="F:RNA binding"/>
    <property type="evidence" value="ECO:0007669"/>
    <property type="project" value="InterPro"/>
</dbReference>
<dbReference type="GO" id="GO:0004523">
    <property type="term" value="F:RNA-DNA hybrid ribonuclease activity"/>
    <property type="evidence" value="ECO:0007669"/>
    <property type="project" value="UniProtKB-UniRule"/>
</dbReference>
<dbReference type="GO" id="GO:0043137">
    <property type="term" value="P:DNA replication, removal of RNA primer"/>
    <property type="evidence" value="ECO:0007669"/>
    <property type="project" value="TreeGrafter"/>
</dbReference>
<dbReference type="GO" id="GO:0006298">
    <property type="term" value="P:mismatch repair"/>
    <property type="evidence" value="ECO:0007669"/>
    <property type="project" value="TreeGrafter"/>
</dbReference>
<dbReference type="CDD" id="cd06590">
    <property type="entry name" value="RNase_HII_bacteria_HIII_like"/>
    <property type="match status" value="1"/>
</dbReference>
<dbReference type="CDD" id="cd14796">
    <property type="entry name" value="RNAse_HIII_N"/>
    <property type="match status" value="1"/>
</dbReference>
<dbReference type="FunFam" id="3.30.310.10:FF:000016">
    <property type="entry name" value="Ribonuclease HIII"/>
    <property type="match status" value="1"/>
</dbReference>
<dbReference type="FunFam" id="3.30.420.10:FF:000047">
    <property type="entry name" value="Ribonuclease HIII"/>
    <property type="match status" value="1"/>
</dbReference>
<dbReference type="Gene3D" id="3.30.420.10">
    <property type="entry name" value="Ribonuclease H-like superfamily/Ribonuclease H"/>
    <property type="match status" value="1"/>
</dbReference>
<dbReference type="Gene3D" id="3.30.310.10">
    <property type="entry name" value="TATA-Binding Protein"/>
    <property type="match status" value="1"/>
</dbReference>
<dbReference type="HAMAP" id="MF_00053">
    <property type="entry name" value="RNase_HIII"/>
    <property type="match status" value="1"/>
</dbReference>
<dbReference type="InterPro" id="IPR001352">
    <property type="entry name" value="RNase_HII/HIII"/>
</dbReference>
<dbReference type="InterPro" id="IPR024567">
    <property type="entry name" value="RNase_HII/HIII_dom"/>
</dbReference>
<dbReference type="InterPro" id="IPR004641">
    <property type="entry name" value="RNase_HIII"/>
</dbReference>
<dbReference type="InterPro" id="IPR024568">
    <property type="entry name" value="RNase_HIII_N"/>
</dbReference>
<dbReference type="InterPro" id="IPR012337">
    <property type="entry name" value="RNaseH-like_sf"/>
</dbReference>
<dbReference type="InterPro" id="IPR036397">
    <property type="entry name" value="RNaseH_sf"/>
</dbReference>
<dbReference type="InterPro" id="IPR012295">
    <property type="entry name" value="TBP_dom_sf"/>
</dbReference>
<dbReference type="NCBIfam" id="TIGR00716">
    <property type="entry name" value="rnhC"/>
    <property type="match status" value="1"/>
</dbReference>
<dbReference type="PANTHER" id="PTHR10954:SF23">
    <property type="entry name" value="RIBONUCLEASE"/>
    <property type="match status" value="1"/>
</dbReference>
<dbReference type="PANTHER" id="PTHR10954">
    <property type="entry name" value="RIBONUCLEASE H2 SUBUNIT A"/>
    <property type="match status" value="1"/>
</dbReference>
<dbReference type="Pfam" id="PF11858">
    <property type="entry name" value="DUF3378"/>
    <property type="match status" value="1"/>
</dbReference>
<dbReference type="Pfam" id="PF01351">
    <property type="entry name" value="RNase_HII"/>
    <property type="match status" value="1"/>
</dbReference>
<dbReference type="PIRSF" id="PIRSF037748">
    <property type="entry name" value="RnhC"/>
    <property type="match status" value="1"/>
</dbReference>
<dbReference type="SUPFAM" id="SSF53098">
    <property type="entry name" value="Ribonuclease H-like"/>
    <property type="match status" value="1"/>
</dbReference>
<dbReference type="PROSITE" id="PS51975">
    <property type="entry name" value="RNASE_H_2"/>
    <property type="match status" value="1"/>
</dbReference>
<evidence type="ECO:0000255" key="1">
    <source>
        <dbReference type="HAMAP-Rule" id="MF_00053"/>
    </source>
</evidence>
<evidence type="ECO:0000255" key="2">
    <source>
        <dbReference type="PROSITE-ProRule" id="PRU01319"/>
    </source>
</evidence>
<reference key="1">
    <citation type="submission" date="2008-10" db="EMBL/GenBank/DDBJ databases">
        <title>Genome sequence of Bacillus cereus AH187.</title>
        <authorList>
            <person name="Dodson R.J."/>
            <person name="Durkin A.S."/>
            <person name="Rosovitz M.J."/>
            <person name="Rasko D.A."/>
            <person name="Kolsto A.B."/>
            <person name="Okstad O.A."/>
            <person name="Ravel J."/>
            <person name="Sutton G."/>
        </authorList>
    </citation>
    <scope>NUCLEOTIDE SEQUENCE [LARGE SCALE GENOMIC DNA]</scope>
    <source>
        <strain>AH187</strain>
    </source>
</reference>
<feature type="chain" id="PRO_1000116853" description="Ribonuclease HIII">
    <location>
        <begin position="1"/>
        <end position="311"/>
    </location>
</feature>
<feature type="domain" description="RNase H type-2" evidence="2">
    <location>
        <begin position="95"/>
        <end position="311"/>
    </location>
</feature>
<feature type="binding site" evidence="1">
    <location>
        <position position="101"/>
    </location>
    <ligand>
        <name>a divalent metal cation</name>
        <dbReference type="ChEBI" id="CHEBI:60240"/>
    </ligand>
</feature>
<feature type="binding site" evidence="1">
    <location>
        <position position="102"/>
    </location>
    <ligand>
        <name>a divalent metal cation</name>
        <dbReference type="ChEBI" id="CHEBI:60240"/>
    </ligand>
</feature>
<feature type="binding site" evidence="1">
    <location>
        <position position="206"/>
    </location>
    <ligand>
        <name>a divalent metal cation</name>
        <dbReference type="ChEBI" id="CHEBI:60240"/>
    </ligand>
</feature>
<gene>
    <name evidence="1" type="primary">rnhC</name>
    <name type="ordered locus">BCAH187_A4682</name>
</gene>
<name>RNH3_BACC7</name>